<reference key="1">
    <citation type="journal article" date="1998" name="Nature">
        <title>Deciphering the biology of Mycobacterium tuberculosis from the complete genome sequence.</title>
        <authorList>
            <person name="Cole S.T."/>
            <person name="Brosch R."/>
            <person name="Parkhill J."/>
            <person name="Garnier T."/>
            <person name="Churcher C.M."/>
            <person name="Harris D.E."/>
            <person name="Gordon S.V."/>
            <person name="Eiglmeier K."/>
            <person name="Gas S."/>
            <person name="Barry C.E. III"/>
            <person name="Tekaia F."/>
            <person name="Badcock K."/>
            <person name="Basham D."/>
            <person name="Brown D."/>
            <person name="Chillingworth T."/>
            <person name="Connor R."/>
            <person name="Davies R.M."/>
            <person name="Devlin K."/>
            <person name="Feltwell T."/>
            <person name="Gentles S."/>
            <person name="Hamlin N."/>
            <person name="Holroyd S."/>
            <person name="Hornsby T."/>
            <person name="Jagels K."/>
            <person name="Krogh A."/>
            <person name="McLean J."/>
            <person name="Moule S."/>
            <person name="Murphy L.D."/>
            <person name="Oliver S."/>
            <person name="Osborne J."/>
            <person name="Quail M.A."/>
            <person name="Rajandream M.A."/>
            <person name="Rogers J."/>
            <person name="Rutter S."/>
            <person name="Seeger K."/>
            <person name="Skelton S."/>
            <person name="Squares S."/>
            <person name="Squares R."/>
            <person name="Sulston J.E."/>
            <person name="Taylor K."/>
            <person name="Whitehead S."/>
            <person name="Barrell B.G."/>
        </authorList>
    </citation>
    <scope>NUCLEOTIDE SEQUENCE [LARGE SCALE GENOMIC DNA]</scope>
    <source>
        <strain>ATCC 25618 / H37Rv</strain>
    </source>
</reference>
<reference key="2">
    <citation type="journal article" date="2011" name="Mol. Cell. Proteomics">
        <title>Proteogenomic analysis of Mycobacterium tuberculosis by high resolution mass spectrometry.</title>
        <authorList>
            <person name="Kelkar D.S."/>
            <person name="Kumar D."/>
            <person name="Kumar P."/>
            <person name="Balakrishnan L."/>
            <person name="Muthusamy B."/>
            <person name="Yadav A.K."/>
            <person name="Shrivastava P."/>
            <person name="Marimuthu A."/>
            <person name="Anand S."/>
            <person name="Sundaram H."/>
            <person name="Kingsbury R."/>
            <person name="Harsha H.C."/>
            <person name="Nair B."/>
            <person name="Prasad T.S."/>
            <person name="Chauhan D.S."/>
            <person name="Katoch K."/>
            <person name="Katoch V.M."/>
            <person name="Kumar P."/>
            <person name="Chaerkady R."/>
            <person name="Ramachandran S."/>
            <person name="Dash D."/>
            <person name="Pandey A."/>
        </authorList>
    </citation>
    <scope>IDENTIFICATION BY MASS SPECTROMETRY [LARGE SCALE ANALYSIS]</scope>
    <source>
        <strain>ATCC 25618 / H37Rv</strain>
    </source>
</reference>
<name>RL18_MYCTU</name>
<keyword id="KW-0002">3D-structure</keyword>
<keyword id="KW-1185">Reference proteome</keyword>
<keyword id="KW-0687">Ribonucleoprotein</keyword>
<keyword id="KW-0689">Ribosomal protein</keyword>
<keyword id="KW-0694">RNA-binding</keyword>
<keyword id="KW-0699">rRNA-binding</keyword>
<proteinExistence type="evidence at protein level"/>
<accession>P9WHD1</accession>
<accession>L0T6A3</accession>
<accession>P66076</accession>
<accession>P95068</accession>
<evidence type="ECO:0000255" key="1">
    <source>
        <dbReference type="HAMAP-Rule" id="MF_01337"/>
    </source>
</evidence>
<evidence type="ECO:0000305" key="2"/>
<organism>
    <name type="scientific">Mycobacterium tuberculosis (strain ATCC 25618 / H37Rv)</name>
    <dbReference type="NCBI Taxonomy" id="83332"/>
    <lineage>
        <taxon>Bacteria</taxon>
        <taxon>Bacillati</taxon>
        <taxon>Actinomycetota</taxon>
        <taxon>Actinomycetes</taxon>
        <taxon>Mycobacteriales</taxon>
        <taxon>Mycobacteriaceae</taxon>
        <taxon>Mycobacterium</taxon>
        <taxon>Mycobacterium tuberculosis complex</taxon>
    </lineage>
</organism>
<protein>
    <recommendedName>
        <fullName evidence="1">Large ribosomal subunit protein uL18</fullName>
    </recommendedName>
    <alternativeName>
        <fullName evidence="2">50S ribosomal protein L18</fullName>
    </alternativeName>
</protein>
<sequence length="122" mass="13184">MAQSVSATRRISRLRRHTRLRKKLSGTAERPRLVVHRSARHIHVQLVNDLNGTTVAAASSIEADVRGVPGDKKARSVRVGQLIAERAKAAGIDTVVFDRGGYTYGGRIAALADAARENGLSF</sequence>
<comment type="function">
    <text evidence="1">This is one of the proteins that bind and probably mediate the attachment of the 5S RNA into the large ribosomal subunit, where it forms part of the central protuberance.</text>
</comment>
<comment type="subunit">
    <text evidence="1">Part of the 50S ribosomal subunit; part of the 5S rRNA/L5/L18/L25 subcomplex. Contacts the 5S and 23S rRNAs.</text>
</comment>
<comment type="similarity">
    <text evidence="1">Belongs to the universal ribosomal protein uL18 family.</text>
</comment>
<feature type="chain" id="PRO_0000131305" description="Large ribosomal subunit protein uL18">
    <location>
        <begin position="1"/>
        <end position="122"/>
    </location>
</feature>
<dbReference type="EMBL" id="AL123456">
    <property type="protein sequence ID" value="CCP43464.1"/>
    <property type="molecule type" value="Genomic_DNA"/>
</dbReference>
<dbReference type="PIR" id="C70644">
    <property type="entry name" value="C70644"/>
</dbReference>
<dbReference type="RefSeq" id="NP_215234.1">
    <property type="nucleotide sequence ID" value="NC_000962.3"/>
</dbReference>
<dbReference type="RefSeq" id="WP_003403677.1">
    <property type="nucleotide sequence ID" value="NZ_NVQJ01000007.1"/>
</dbReference>
<dbReference type="PDB" id="5V7Q">
    <property type="method" value="EM"/>
    <property type="resolution" value="3.70 A"/>
    <property type="chains" value="O=1-122"/>
</dbReference>
<dbReference type="PDB" id="5V93">
    <property type="method" value="EM"/>
    <property type="resolution" value="4.00 A"/>
    <property type="chains" value="O=1-122"/>
</dbReference>
<dbReference type="PDB" id="7KGB">
    <property type="method" value="EM"/>
    <property type="resolution" value="2.70 A"/>
    <property type="chains" value="O=1-122"/>
</dbReference>
<dbReference type="PDB" id="7MSC">
    <property type="method" value="EM"/>
    <property type="resolution" value="2.97 A"/>
    <property type="chains" value="O=1-122"/>
</dbReference>
<dbReference type="PDB" id="7MSH">
    <property type="method" value="EM"/>
    <property type="resolution" value="3.23 A"/>
    <property type="chains" value="O=1-122"/>
</dbReference>
<dbReference type="PDB" id="7MSM">
    <property type="method" value="EM"/>
    <property type="resolution" value="2.79 A"/>
    <property type="chains" value="O=1-122"/>
</dbReference>
<dbReference type="PDB" id="7MSZ">
    <property type="method" value="EM"/>
    <property type="resolution" value="3.10 A"/>
    <property type="chains" value="O=1-122"/>
</dbReference>
<dbReference type="PDB" id="7MT2">
    <property type="method" value="EM"/>
    <property type="resolution" value="2.76 A"/>
    <property type="chains" value="O=1-122"/>
</dbReference>
<dbReference type="PDB" id="7MT3">
    <property type="method" value="EM"/>
    <property type="resolution" value="2.80 A"/>
    <property type="chains" value="O=1-122"/>
</dbReference>
<dbReference type="PDB" id="7MT7">
    <property type="method" value="EM"/>
    <property type="resolution" value="2.71 A"/>
    <property type="chains" value="O=1-122"/>
</dbReference>
<dbReference type="PDB" id="7SFR">
    <property type="method" value="EM"/>
    <property type="resolution" value="2.60 A"/>
    <property type="chains" value="O=1-122"/>
</dbReference>
<dbReference type="PDBsum" id="5V7Q"/>
<dbReference type="PDBsum" id="5V93"/>
<dbReference type="PDBsum" id="7KGB"/>
<dbReference type="PDBsum" id="7MSC"/>
<dbReference type="PDBsum" id="7MSH"/>
<dbReference type="PDBsum" id="7MSM"/>
<dbReference type="PDBsum" id="7MSZ"/>
<dbReference type="PDBsum" id="7MT2"/>
<dbReference type="PDBsum" id="7MT3"/>
<dbReference type="PDBsum" id="7MT7"/>
<dbReference type="PDBsum" id="7SFR"/>
<dbReference type="EMDB" id="EMD-22865"/>
<dbReference type="EMDB" id="EMD-23961"/>
<dbReference type="EMDB" id="EMD-23962"/>
<dbReference type="EMDB" id="EMD-23969"/>
<dbReference type="EMDB" id="EMD-23972"/>
<dbReference type="EMDB" id="EMD-23974"/>
<dbReference type="EMDB" id="EMD-23975"/>
<dbReference type="EMDB" id="EMD-23976"/>
<dbReference type="EMDB" id="EMD-8645"/>
<dbReference type="SMR" id="P9WHD1"/>
<dbReference type="FunCoup" id="P9WHD1">
    <property type="interactions" value="254"/>
</dbReference>
<dbReference type="STRING" id="83332.Rv0720"/>
<dbReference type="PaxDb" id="83332-Rv0720"/>
<dbReference type="DNASU" id="888457"/>
<dbReference type="GeneID" id="45424685"/>
<dbReference type="GeneID" id="888457"/>
<dbReference type="KEGG" id="mtu:Rv0720"/>
<dbReference type="KEGG" id="mtv:RVBD_0720"/>
<dbReference type="TubercuList" id="Rv0720"/>
<dbReference type="eggNOG" id="COG0256">
    <property type="taxonomic scope" value="Bacteria"/>
</dbReference>
<dbReference type="InParanoid" id="P9WHD1"/>
<dbReference type="OrthoDB" id="9810939at2"/>
<dbReference type="PhylomeDB" id="P9WHD1"/>
<dbReference type="PRO" id="PR:P9WHD1"/>
<dbReference type="Proteomes" id="UP000001584">
    <property type="component" value="Chromosome"/>
</dbReference>
<dbReference type="GO" id="GO:0022625">
    <property type="term" value="C:cytosolic large ribosomal subunit"/>
    <property type="evidence" value="ECO:0000318"/>
    <property type="project" value="GO_Central"/>
</dbReference>
<dbReference type="GO" id="GO:0008097">
    <property type="term" value="F:5S rRNA binding"/>
    <property type="evidence" value="ECO:0000318"/>
    <property type="project" value="GO_Central"/>
</dbReference>
<dbReference type="GO" id="GO:0003735">
    <property type="term" value="F:structural constituent of ribosome"/>
    <property type="evidence" value="ECO:0007669"/>
    <property type="project" value="InterPro"/>
</dbReference>
<dbReference type="GO" id="GO:0006412">
    <property type="term" value="P:translation"/>
    <property type="evidence" value="ECO:0007669"/>
    <property type="project" value="UniProtKB-UniRule"/>
</dbReference>
<dbReference type="CDD" id="cd00432">
    <property type="entry name" value="Ribosomal_L18_L5e"/>
    <property type="match status" value="1"/>
</dbReference>
<dbReference type="FunFam" id="3.30.420.100:FF:000001">
    <property type="entry name" value="50S ribosomal protein L18"/>
    <property type="match status" value="1"/>
</dbReference>
<dbReference type="Gene3D" id="3.30.420.100">
    <property type="match status" value="1"/>
</dbReference>
<dbReference type="HAMAP" id="MF_01337_B">
    <property type="entry name" value="Ribosomal_uL18_B"/>
    <property type="match status" value="1"/>
</dbReference>
<dbReference type="InterPro" id="IPR004389">
    <property type="entry name" value="Ribosomal_uL18_bac-type"/>
</dbReference>
<dbReference type="InterPro" id="IPR005484">
    <property type="entry name" value="Ribosomal_uL18_bac/euk"/>
</dbReference>
<dbReference type="NCBIfam" id="TIGR00060">
    <property type="entry name" value="L18_bact"/>
    <property type="match status" value="1"/>
</dbReference>
<dbReference type="PANTHER" id="PTHR12899">
    <property type="entry name" value="39S RIBOSOMAL PROTEIN L18, MITOCHONDRIAL"/>
    <property type="match status" value="1"/>
</dbReference>
<dbReference type="PANTHER" id="PTHR12899:SF3">
    <property type="entry name" value="LARGE RIBOSOMAL SUBUNIT PROTEIN UL18M"/>
    <property type="match status" value="1"/>
</dbReference>
<dbReference type="Pfam" id="PF00861">
    <property type="entry name" value="Ribosomal_L18p"/>
    <property type="match status" value="1"/>
</dbReference>
<dbReference type="SUPFAM" id="SSF53137">
    <property type="entry name" value="Translational machinery components"/>
    <property type="match status" value="1"/>
</dbReference>
<gene>
    <name evidence="1" type="primary">rplR</name>
    <name type="ordered locus">Rv0720</name>
    <name type="ORF">MTCY210.39</name>
</gene>